<proteinExistence type="inferred from homology"/>
<protein>
    <recommendedName>
        <fullName evidence="2">Transaldolase</fullName>
        <ecNumber evidence="2">2.2.1.2</ecNumber>
    </recommendedName>
</protein>
<comment type="function">
    <text evidence="2">Transaldolase is important for the balance of metabolites in the pentose-phosphate pathway.</text>
</comment>
<comment type="catalytic activity">
    <reaction evidence="2">
        <text>D-sedoheptulose 7-phosphate + D-glyceraldehyde 3-phosphate = D-erythrose 4-phosphate + beta-D-fructose 6-phosphate</text>
        <dbReference type="Rhea" id="RHEA:17053"/>
        <dbReference type="ChEBI" id="CHEBI:16897"/>
        <dbReference type="ChEBI" id="CHEBI:57483"/>
        <dbReference type="ChEBI" id="CHEBI:57634"/>
        <dbReference type="ChEBI" id="CHEBI:59776"/>
        <dbReference type="EC" id="2.2.1.2"/>
    </reaction>
</comment>
<comment type="pathway">
    <text evidence="2">Carbohydrate degradation; pentose phosphate pathway; D-glyceraldehyde 3-phosphate and beta-D-fructose 6-phosphate from D-ribose 5-phosphate and D-xylulose 5-phosphate (non-oxidative stage): step 2/3.</text>
</comment>
<comment type="subunit">
    <text evidence="1">Homodimer.</text>
</comment>
<comment type="subcellular location">
    <subcellularLocation>
        <location evidence="2">Cytoplasm</location>
    </subcellularLocation>
</comment>
<comment type="similarity">
    <text evidence="2">Belongs to the transaldolase family. Type 1 subfamily.</text>
</comment>
<sequence length="316" mass="34485">MNQLDALKQYTTVVADTGDFKQLAQFQPQDATTNPSLILKAVQKPEYAPLLKDCVTRWHGRAIDELMDRLIVRFGCEILSIIPGRVSTEVDARLSFDTAATVARAERIVELYQAEGLHIDRVLIKIAATWEGIQAARQLEQRGIHTNLTLLFSFAQAVACGQAKVQLISPFVGRIYDWYKKQAGANWDEAAMAGANDPGVQSVRAIYNHYKHFGIGTEVMGASFRNTGQIVALAGCDLLTIAPELLAQLAASNAPVARVLDPEAARRVALQPVQYDEAGFRYALNADAMATEKLAEGIRAFAADAAKLEQLMQAAA</sequence>
<organism>
    <name type="scientific">Acidovorax sp. (strain JS42)</name>
    <dbReference type="NCBI Taxonomy" id="232721"/>
    <lineage>
        <taxon>Bacteria</taxon>
        <taxon>Pseudomonadati</taxon>
        <taxon>Pseudomonadota</taxon>
        <taxon>Betaproteobacteria</taxon>
        <taxon>Burkholderiales</taxon>
        <taxon>Comamonadaceae</taxon>
        <taxon>Acidovorax</taxon>
    </lineage>
</organism>
<accession>A1W3W5</accession>
<dbReference type="EC" id="2.2.1.2" evidence="2"/>
<dbReference type="EMBL" id="CP000539">
    <property type="protein sequence ID" value="ABM40940.1"/>
    <property type="molecule type" value="Genomic_DNA"/>
</dbReference>
<dbReference type="SMR" id="A1W3W5"/>
<dbReference type="STRING" id="232721.Ajs_0696"/>
<dbReference type="KEGG" id="ajs:Ajs_0696"/>
<dbReference type="eggNOG" id="COG0176">
    <property type="taxonomic scope" value="Bacteria"/>
</dbReference>
<dbReference type="HOGENOM" id="CLU_047470_0_1_4"/>
<dbReference type="UniPathway" id="UPA00115">
    <property type="reaction ID" value="UER00414"/>
</dbReference>
<dbReference type="Proteomes" id="UP000000645">
    <property type="component" value="Chromosome"/>
</dbReference>
<dbReference type="GO" id="GO:0005737">
    <property type="term" value="C:cytoplasm"/>
    <property type="evidence" value="ECO:0007669"/>
    <property type="project" value="UniProtKB-SubCell"/>
</dbReference>
<dbReference type="GO" id="GO:0004801">
    <property type="term" value="F:transaldolase activity"/>
    <property type="evidence" value="ECO:0000250"/>
    <property type="project" value="UniProtKB"/>
</dbReference>
<dbReference type="GO" id="GO:0005975">
    <property type="term" value="P:carbohydrate metabolic process"/>
    <property type="evidence" value="ECO:0007669"/>
    <property type="project" value="InterPro"/>
</dbReference>
<dbReference type="GO" id="GO:0006098">
    <property type="term" value="P:pentose-phosphate shunt"/>
    <property type="evidence" value="ECO:0007669"/>
    <property type="project" value="UniProtKB-UniRule"/>
</dbReference>
<dbReference type="CDD" id="cd00957">
    <property type="entry name" value="Transaldolase_TalAB"/>
    <property type="match status" value="1"/>
</dbReference>
<dbReference type="FunFam" id="3.20.20.70:FF:000002">
    <property type="entry name" value="Transaldolase"/>
    <property type="match status" value="1"/>
</dbReference>
<dbReference type="Gene3D" id="3.20.20.70">
    <property type="entry name" value="Aldolase class I"/>
    <property type="match status" value="1"/>
</dbReference>
<dbReference type="HAMAP" id="MF_00492">
    <property type="entry name" value="Transaldolase_1"/>
    <property type="match status" value="1"/>
</dbReference>
<dbReference type="InterPro" id="IPR013785">
    <property type="entry name" value="Aldolase_TIM"/>
</dbReference>
<dbReference type="InterPro" id="IPR001585">
    <property type="entry name" value="TAL/FSA"/>
</dbReference>
<dbReference type="InterPro" id="IPR004730">
    <property type="entry name" value="Transaldolase_1"/>
</dbReference>
<dbReference type="InterPro" id="IPR018225">
    <property type="entry name" value="Transaldolase_AS"/>
</dbReference>
<dbReference type="NCBIfam" id="TIGR00874">
    <property type="entry name" value="talAB"/>
    <property type="match status" value="1"/>
</dbReference>
<dbReference type="PANTHER" id="PTHR10683">
    <property type="entry name" value="TRANSALDOLASE"/>
    <property type="match status" value="1"/>
</dbReference>
<dbReference type="PANTHER" id="PTHR10683:SF18">
    <property type="entry name" value="TRANSALDOLASE"/>
    <property type="match status" value="1"/>
</dbReference>
<dbReference type="Pfam" id="PF00923">
    <property type="entry name" value="TAL_FSA"/>
    <property type="match status" value="1"/>
</dbReference>
<dbReference type="SUPFAM" id="SSF51569">
    <property type="entry name" value="Aldolase"/>
    <property type="match status" value="1"/>
</dbReference>
<dbReference type="PROSITE" id="PS01054">
    <property type="entry name" value="TRANSALDOLASE_1"/>
    <property type="match status" value="1"/>
</dbReference>
<dbReference type="PROSITE" id="PS00958">
    <property type="entry name" value="TRANSALDOLASE_2"/>
    <property type="match status" value="1"/>
</dbReference>
<name>TAL_ACISJ</name>
<gene>
    <name evidence="2" type="primary">tal</name>
    <name type="ordered locus">Ajs_0696</name>
</gene>
<keyword id="KW-0963">Cytoplasm</keyword>
<keyword id="KW-0570">Pentose shunt</keyword>
<keyword id="KW-0704">Schiff base</keyword>
<keyword id="KW-0808">Transferase</keyword>
<evidence type="ECO:0000250" key="1"/>
<evidence type="ECO:0000255" key="2">
    <source>
        <dbReference type="HAMAP-Rule" id="MF_00492"/>
    </source>
</evidence>
<reference key="1">
    <citation type="submission" date="2006-12" db="EMBL/GenBank/DDBJ databases">
        <title>Complete sequence of chromosome 1 of Acidovorax sp. JS42.</title>
        <authorList>
            <person name="Copeland A."/>
            <person name="Lucas S."/>
            <person name="Lapidus A."/>
            <person name="Barry K."/>
            <person name="Detter J.C."/>
            <person name="Glavina del Rio T."/>
            <person name="Dalin E."/>
            <person name="Tice H."/>
            <person name="Pitluck S."/>
            <person name="Chertkov O."/>
            <person name="Brettin T."/>
            <person name="Bruce D."/>
            <person name="Han C."/>
            <person name="Tapia R."/>
            <person name="Gilna P."/>
            <person name="Schmutz J."/>
            <person name="Larimer F."/>
            <person name="Land M."/>
            <person name="Hauser L."/>
            <person name="Kyrpides N."/>
            <person name="Kim E."/>
            <person name="Stahl D."/>
            <person name="Richardson P."/>
        </authorList>
    </citation>
    <scope>NUCLEOTIDE SEQUENCE [LARGE SCALE GENOMIC DNA]</scope>
    <source>
        <strain>JS42</strain>
    </source>
</reference>
<feature type="chain" id="PRO_1000014481" description="Transaldolase">
    <location>
        <begin position="1"/>
        <end position="316"/>
    </location>
</feature>
<feature type="active site" description="Schiff-base intermediate with substrate" evidence="2">
    <location>
        <position position="125"/>
    </location>
</feature>